<sequence>MKTLFEEIKASIKNNYNQDRSFWRPVLPWGGVFTIKAGRKAVSCTPLYVEIRLKNTCTIDGFLMLLYVILNENENFPRELSLHLGREFVDCFLYLMDTYSFTTVKLLWIWDKMEKQQYKSEVHKASLIIDLFGNEHDNFTKNLENLMSTIQESYCSNWRCPTRVQEDQQRTINIKCGGLREFSQRVFCHGAPPFVVLNMQHWKSEDLAYVPYYLDLSDHKYLLEGATLFNKEEHHYSAAFQIDGHWMHYDGLRNVNLILLNKPPEFLLLSSLVYIRATEK</sequence>
<evidence type="ECO:0000250" key="1">
    <source>
        <dbReference type="UniProtKB" id="Q4KL13"/>
    </source>
</evidence>
<organism>
    <name type="scientific">Bos taurus</name>
    <name type="common">Bovine</name>
    <dbReference type="NCBI Taxonomy" id="9913"/>
    <lineage>
        <taxon>Eukaryota</taxon>
        <taxon>Metazoa</taxon>
        <taxon>Chordata</taxon>
        <taxon>Craniata</taxon>
        <taxon>Vertebrata</taxon>
        <taxon>Euteleostomi</taxon>
        <taxon>Mammalia</taxon>
        <taxon>Eutheria</taxon>
        <taxon>Laurasiatheria</taxon>
        <taxon>Artiodactyla</taxon>
        <taxon>Ruminantia</taxon>
        <taxon>Pecora</taxon>
        <taxon>Bovidae</taxon>
        <taxon>Bovinae</taxon>
        <taxon>Bos</taxon>
    </lineage>
</organism>
<reference key="1">
    <citation type="submission" date="2006-01" db="EMBL/GenBank/DDBJ databases">
        <authorList>
            <consortium name="NIH - Mammalian Gene Collection (MGC) project"/>
        </authorList>
    </citation>
    <scope>NUCLEOTIDE SEQUENCE [LARGE SCALE MRNA]</scope>
    <source>
        <strain>Hereford</strain>
        <tissue>Testis</tissue>
    </source>
</reference>
<gene>
    <name type="primary">DORIP1</name>
</gene>
<protein>
    <recommendedName>
        <fullName>Dopamine receptor-interacting protein 1</fullName>
    </recommendedName>
</protein>
<feature type="chain" id="PRO_0000274306" description="Dopamine receptor-interacting protein 1">
    <location>
        <begin position="1"/>
        <end position="280"/>
    </location>
</feature>
<comment type="function">
    <text evidence="1">Could be a regulator of the dopamine receptor signaling pathway.</text>
</comment>
<comment type="subunit">
    <text evidence="1">Interacts with DRD1, the dopamine D1 receptor.</text>
</comment>
<accession>Q2KIN3</accession>
<proteinExistence type="evidence at transcript level"/>
<keyword id="KW-1185">Reference proteome</keyword>
<dbReference type="EMBL" id="BC112575">
    <property type="protein sequence ID" value="AAI12576.1"/>
    <property type="molecule type" value="mRNA"/>
</dbReference>
<dbReference type="RefSeq" id="NP_001039906.1">
    <property type="nucleotide sequence ID" value="NM_001046441.2"/>
</dbReference>
<dbReference type="FunCoup" id="Q2KIN3">
    <property type="interactions" value="813"/>
</dbReference>
<dbReference type="PaxDb" id="9913-ENSBTAP00000047138"/>
<dbReference type="Ensembl" id="ENSBTAT00000128461.1">
    <property type="protein sequence ID" value="ENSBTAP00000100803.1"/>
    <property type="gene ID" value="ENSBTAG00000016062.6"/>
</dbReference>
<dbReference type="GeneID" id="538768"/>
<dbReference type="KEGG" id="bta:538768"/>
<dbReference type="CTD" id="538768"/>
<dbReference type="VEuPathDB" id="HostDB:ENSBTAG00000016062"/>
<dbReference type="VGNC" id="VGNC:52672">
    <property type="gene designation" value="C21H14orf28"/>
</dbReference>
<dbReference type="eggNOG" id="ENOG502QSUZ">
    <property type="taxonomic scope" value="Eukaryota"/>
</dbReference>
<dbReference type="GeneTree" id="ENSGT00390000012377"/>
<dbReference type="HOGENOM" id="CLU_085396_0_0_1"/>
<dbReference type="InParanoid" id="Q2KIN3"/>
<dbReference type="OMA" id="HDNFTRN"/>
<dbReference type="OrthoDB" id="8616706at2759"/>
<dbReference type="TreeFam" id="TF332440"/>
<dbReference type="Proteomes" id="UP000009136">
    <property type="component" value="Chromosome 21"/>
</dbReference>
<dbReference type="Bgee" id="ENSBTAG00000016062">
    <property type="expression patterns" value="Expressed in spermatid and 105 other cell types or tissues"/>
</dbReference>
<dbReference type="InterPro" id="IPR040029">
    <property type="entry name" value="C14orf28-like"/>
</dbReference>
<dbReference type="PANTHER" id="PTHR35350">
    <property type="entry name" value="HYPOTHETICAL LOC314168"/>
    <property type="match status" value="1"/>
</dbReference>
<dbReference type="PANTHER" id="PTHR35350:SF1">
    <property type="entry name" value="HYPOTHETICAL LOC314168"/>
    <property type="match status" value="1"/>
</dbReference>
<name>DRIP1_BOVIN</name>